<comment type="similarity">
    <text evidence="1">Belongs to the complex I NDUFA4 subunit family.</text>
</comment>
<protein>
    <recommendedName>
        <fullName>NADH dehydrogenase [ubiquinone] 1 alpha subcomplex subunit 4-like 2</fullName>
    </recommendedName>
    <alternativeName>
        <fullName>NADH-ubiquinone oxidoreductase MLRQ subunit homolog</fullName>
        <shortName>NUOMS</shortName>
    </alternativeName>
</protein>
<organism>
    <name type="scientific">Homo sapiens</name>
    <name type="common">Human</name>
    <dbReference type="NCBI Taxonomy" id="9606"/>
    <lineage>
        <taxon>Eukaryota</taxon>
        <taxon>Metazoa</taxon>
        <taxon>Chordata</taxon>
        <taxon>Craniata</taxon>
        <taxon>Vertebrata</taxon>
        <taxon>Euteleostomi</taxon>
        <taxon>Mammalia</taxon>
        <taxon>Eutheria</taxon>
        <taxon>Euarchontoglires</taxon>
        <taxon>Primates</taxon>
        <taxon>Haplorrhini</taxon>
        <taxon>Catarrhini</taxon>
        <taxon>Hominidae</taxon>
        <taxon>Homo</taxon>
    </lineage>
</organism>
<gene>
    <name type="primary">NDUFA4L2</name>
</gene>
<feature type="chain" id="PRO_0000118825" description="NADH dehydrogenase [ubiquinone] 1 alpha subcomplex subunit 4-like 2">
    <location>
        <begin position="1"/>
        <end position="87"/>
    </location>
</feature>
<reference key="1">
    <citation type="journal article" date="2000" name="Proc. Natl. Acad. Sci. U.S.A.">
        <title>Gene expression profiling in the human hypothalamus-pituitary-adrenal axis and full-length cDNA cloning.</title>
        <authorList>
            <person name="Hu R.-M."/>
            <person name="Han Z.-G."/>
            <person name="Song H.-D."/>
            <person name="Peng Y.-D."/>
            <person name="Huang Q.-H."/>
            <person name="Ren S.-X."/>
            <person name="Gu Y.-J."/>
            <person name="Huang C.-H."/>
            <person name="Li Y.-B."/>
            <person name="Jiang C.-L."/>
            <person name="Fu G."/>
            <person name="Zhang Q.-H."/>
            <person name="Gu B.-W."/>
            <person name="Dai M."/>
            <person name="Mao Y.-F."/>
            <person name="Gao G.-F."/>
            <person name="Rong R."/>
            <person name="Ye M."/>
            <person name="Zhou J."/>
            <person name="Xu S.-H."/>
            <person name="Gu J."/>
            <person name="Shi J.-X."/>
            <person name="Jin W.-R."/>
            <person name="Zhang C.-K."/>
            <person name="Wu T.-M."/>
            <person name="Huang G.-Y."/>
            <person name="Chen Z."/>
            <person name="Chen M.-D."/>
            <person name="Chen J.-L."/>
        </authorList>
    </citation>
    <scope>NUCLEOTIDE SEQUENCE [LARGE SCALE MRNA]</scope>
    <source>
        <tissue>Adrenal gland</tissue>
    </source>
</reference>
<reference key="2">
    <citation type="submission" date="2004-06" db="EMBL/GenBank/DDBJ databases">
        <title>Cloning of human full open reading frames in Gateway(TM) system entry vector (pDONR201).</title>
        <authorList>
            <person name="Ebert L."/>
            <person name="Schick M."/>
            <person name="Neubert P."/>
            <person name="Schatten R."/>
            <person name="Henze S."/>
            <person name="Korn B."/>
        </authorList>
    </citation>
    <scope>NUCLEOTIDE SEQUENCE [LARGE SCALE MRNA]</scope>
</reference>
<reference key="3">
    <citation type="journal article" date="2004" name="Genome Res.">
        <title>The status, quality, and expansion of the NIH full-length cDNA project: the Mammalian Gene Collection (MGC).</title>
        <authorList>
            <consortium name="The MGC Project Team"/>
        </authorList>
    </citation>
    <scope>NUCLEOTIDE SEQUENCE [LARGE SCALE MRNA]</scope>
    <source>
        <tissue>Muscle</tissue>
    </source>
</reference>
<sequence length="87" mass="9966">MAGASLGARFYRQIKRHPGIIPMIGLICLGMGSAALYLLRLALRSPDVCWDRKNNPEPWNRLSPNDQYKFLAVSTDYKKLKKDRPDF</sequence>
<evidence type="ECO:0000305" key="1"/>
<dbReference type="EMBL" id="AF164796">
    <property type="protein sequence ID" value="AAF80760.1"/>
    <property type="molecule type" value="mRNA"/>
</dbReference>
<dbReference type="EMBL" id="CR457176">
    <property type="protein sequence ID" value="CAG33457.1"/>
    <property type="molecule type" value="mRNA"/>
</dbReference>
<dbReference type="EMBL" id="BC011910">
    <property type="protein sequence ID" value="AAH11910.1"/>
    <property type="molecule type" value="mRNA"/>
</dbReference>
<dbReference type="CCDS" id="CCDS8935.1"/>
<dbReference type="RefSeq" id="NP_001381889.1">
    <property type="nucleotide sequence ID" value="NM_001394960.1"/>
</dbReference>
<dbReference type="RefSeq" id="NP_001381890.1">
    <property type="nucleotide sequence ID" value="NM_001394961.1"/>
</dbReference>
<dbReference type="RefSeq" id="NP_064527.1">
    <property type="nucleotide sequence ID" value="NM_020142.4"/>
</dbReference>
<dbReference type="SMR" id="Q9NRX3"/>
<dbReference type="BioGRID" id="121231">
    <property type="interactions" value="23"/>
</dbReference>
<dbReference type="FunCoup" id="Q9NRX3">
    <property type="interactions" value="249"/>
</dbReference>
<dbReference type="IntAct" id="Q9NRX3">
    <property type="interactions" value="19"/>
</dbReference>
<dbReference type="MINT" id="Q9NRX3"/>
<dbReference type="STRING" id="9606.ENSP00000377411"/>
<dbReference type="BindingDB" id="Q9NRX3"/>
<dbReference type="ChEMBL" id="CHEMBL2363065"/>
<dbReference type="DrugBank" id="DB00157">
    <property type="generic name" value="NADH"/>
</dbReference>
<dbReference type="DrugCentral" id="Q9NRX3"/>
<dbReference type="iPTMnet" id="Q9NRX3"/>
<dbReference type="PhosphoSitePlus" id="Q9NRX3"/>
<dbReference type="BioMuta" id="NDUFA4L2"/>
<dbReference type="DMDM" id="23396790"/>
<dbReference type="MassIVE" id="Q9NRX3"/>
<dbReference type="PaxDb" id="9606-ENSP00000377411"/>
<dbReference type="PeptideAtlas" id="Q9NRX3"/>
<dbReference type="ProteomicsDB" id="82434"/>
<dbReference type="Antibodypedia" id="43977">
    <property type="antibodies" value="149 antibodies from 23 providers"/>
</dbReference>
<dbReference type="DNASU" id="56901"/>
<dbReference type="Ensembl" id="ENST00000393825.5">
    <property type="protein sequence ID" value="ENSP00000377411.1"/>
    <property type="gene ID" value="ENSG00000185633.11"/>
</dbReference>
<dbReference type="Ensembl" id="ENST00000554503.6">
    <property type="protein sequence ID" value="ENSP00000450664.1"/>
    <property type="gene ID" value="ENSG00000185633.11"/>
</dbReference>
<dbReference type="GeneID" id="56901"/>
<dbReference type="KEGG" id="hsa:56901"/>
<dbReference type="MANE-Select" id="ENST00000554503.6">
    <property type="protein sequence ID" value="ENSP00000450664.1"/>
    <property type="RefSeq nucleotide sequence ID" value="NM_001394961.1"/>
    <property type="RefSeq protein sequence ID" value="NP_001381890.1"/>
</dbReference>
<dbReference type="UCSC" id="uc001sno.4">
    <property type="organism name" value="human"/>
</dbReference>
<dbReference type="AGR" id="HGNC:29836"/>
<dbReference type="CTD" id="56901"/>
<dbReference type="DisGeNET" id="56901"/>
<dbReference type="GeneCards" id="NDUFA4L2"/>
<dbReference type="HGNC" id="HGNC:29836">
    <property type="gene designation" value="NDUFA4L2"/>
</dbReference>
<dbReference type="HPA" id="ENSG00000185633">
    <property type="expression patterns" value="Tissue enhanced (esophagus)"/>
</dbReference>
<dbReference type="neXtProt" id="NX_Q9NRX3"/>
<dbReference type="OpenTargets" id="ENSG00000185633"/>
<dbReference type="PharmGKB" id="PA144596402"/>
<dbReference type="VEuPathDB" id="HostDB:ENSG00000185633"/>
<dbReference type="eggNOG" id="ENOG502SG4Q">
    <property type="taxonomic scope" value="Eukaryota"/>
</dbReference>
<dbReference type="GeneTree" id="ENSGT00940000161040"/>
<dbReference type="HOGENOM" id="CLU_181002_0_0_1"/>
<dbReference type="InParanoid" id="Q9NRX3"/>
<dbReference type="OMA" id="MDYKKLK"/>
<dbReference type="OrthoDB" id="5511684at2759"/>
<dbReference type="PAN-GO" id="Q9NRX3">
    <property type="GO annotations" value="1 GO annotation based on evolutionary models"/>
</dbReference>
<dbReference type="PhylomeDB" id="Q9NRX3"/>
<dbReference type="TreeFam" id="TF106383"/>
<dbReference type="BioCyc" id="MetaCyc:G66-33023-MONOMER"/>
<dbReference type="PathwayCommons" id="Q9NRX3"/>
<dbReference type="SignaLink" id="Q9NRX3"/>
<dbReference type="BioGRID-ORCS" id="56901">
    <property type="hits" value="23 hits in 1158 CRISPR screens"/>
</dbReference>
<dbReference type="ChiTaRS" id="NDUFA4L2">
    <property type="organism name" value="human"/>
</dbReference>
<dbReference type="GenomeRNAi" id="56901"/>
<dbReference type="Pharos" id="Q9NRX3">
    <property type="development level" value="Tclin"/>
</dbReference>
<dbReference type="PRO" id="PR:Q9NRX3"/>
<dbReference type="Proteomes" id="UP000005640">
    <property type="component" value="Chromosome 12"/>
</dbReference>
<dbReference type="RNAct" id="Q9NRX3">
    <property type="molecule type" value="protein"/>
</dbReference>
<dbReference type="Bgee" id="ENSG00000185633">
    <property type="expression patterns" value="Expressed in lower esophagus mucosa and 150 other cell types or tissues"/>
</dbReference>
<dbReference type="ExpressionAtlas" id="Q9NRX3">
    <property type="expression patterns" value="baseline and differential"/>
</dbReference>
<dbReference type="GO" id="GO:0005739">
    <property type="term" value="C:mitochondrion"/>
    <property type="evidence" value="ECO:0006056"/>
    <property type="project" value="FlyBase"/>
</dbReference>
<dbReference type="GO" id="GO:0045277">
    <property type="term" value="C:respiratory chain complex IV"/>
    <property type="evidence" value="ECO:0000318"/>
    <property type="project" value="GO_Central"/>
</dbReference>
<dbReference type="InterPro" id="IPR010530">
    <property type="entry name" value="B12D"/>
</dbReference>
<dbReference type="PANTHER" id="PTHR14256:SF5">
    <property type="entry name" value="NADH DEHYDROGENASE [UBIQUINONE] 1 ALPHA SUBCOMPLEX SUBUNIT 4-LIKE 2"/>
    <property type="match status" value="1"/>
</dbReference>
<dbReference type="PANTHER" id="PTHR14256">
    <property type="entry name" value="NADH-UBIQUINONE OXIDOREDUCTASE MLRQ SUBUNIT"/>
    <property type="match status" value="1"/>
</dbReference>
<dbReference type="Pfam" id="PF06522">
    <property type="entry name" value="B12D"/>
    <property type="match status" value="1"/>
</dbReference>
<name>NUA4L_HUMAN</name>
<accession>Q9NRX3</accession>
<accession>Q6IAH9</accession>
<keyword id="KW-1267">Proteomics identification</keyword>
<keyword id="KW-1185">Reference proteome</keyword>
<proteinExistence type="evidence at protein level"/>